<evidence type="ECO:0000250" key="1"/>
<evidence type="ECO:0000255" key="2"/>
<evidence type="ECO:0000269" key="3">
    <source>
    </source>
</evidence>
<evidence type="ECO:0000305" key="4"/>
<organism>
    <name type="scientific">Picea sitchensis</name>
    <name type="common">Sitka spruce</name>
    <name type="synonym">Pinus sitchensis</name>
    <dbReference type="NCBI Taxonomy" id="3332"/>
    <lineage>
        <taxon>Eukaryota</taxon>
        <taxon>Viridiplantae</taxon>
        <taxon>Streptophyta</taxon>
        <taxon>Embryophyta</taxon>
        <taxon>Tracheophyta</taxon>
        <taxon>Spermatophyta</taxon>
        <taxon>Pinopsida</taxon>
        <taxon>Pinidae</taxon>
        <taxon>Conifers I</taxon>
        <taxon>Pinales</taxon>
        <taxon>Pinaceae</taxon>
        <taxon>Picea</taxon>
    </lineage>
</organism>
<reference key="1">
    <citation type="journal article" date="2011" name="Plant J.">
        <title>An integrated genomic, proteomic and biochemical analysis of (+)-3-carene biosynthesis in Sitka spruce (Picea sitchensis) genotypes that are resistant or susceptible to white pine weevil.</title>
        <authorList>
            <person name="Hall D.E."/>
            <person name="Robert J.A."/>
            <person name="Keeling C.I."/>
            <person name="Domanski D."/>
            <person name="Quesada A.L."/>
            <person name="Jancsik S."/>
            <person name="Kuzyk M.A."/>
            <person name="Hamberger B."/>
            <person name="Borchers C.H."/>
            <person name="Bohlmann J."/>
        </authorList>
    </citation>
    <scope>NUCLEOTIDE SEQUENCE [GENOMIC DNA / MRNA]</scope>
    <scope>FUNCTION</scope>
    <scope>CATALYTIC ACTIVITY</scope>
    <scope>INDUCTION BY JASMONIC ACID</scope>
    <scope>BIOPHYSICOCHEMICAL PROPERTIES</scope>
    <source>
        <strain>cv. H898</strain>
        <strain>cv. Q903</strain>
    </source>
</reference>
<accession>F1CKI9</accession>
<accession>F1CKJ0</accession>
<dbReference type="EC" id="4.2.3.107"/>
<dbReference type="EMBL" id="HQ336801">
    <property type="protein sequence ID" value="ADU85927.1"/>
    <property type="molecule type" value="Genomic_DNA"/>
</dbReference>
<dbReference type="EMBL" id="HQ336802">
    <property type="protein sequence ID" value="ADU85928.1"/>
    <property type="molecule type" value="mRNA"/>
</dbReference>
<dbReference type="EMBL" id="HQ850277">
    <property type="protein sequence ID" value="ADY38569.1"/>
    <property type="molecule type" value="Genomic_DNA"/>
</dbReference>
<dbReference type="SMR" id="F1CKI9"/>
<dbReference type="KEGG" id="ag:ADU85927"/>
<dbReference type="BRENDA" id="4.2.3.107">
    <property type="organism ID" value="8974"/>
</dbReference>
<dbReference type="BRENDA" id="4.2.3.113">
    <property type="organism ID" value="8974"/>
</dbReference>
<dbReference type="UniPathway" id="UPA00924"/>
<dbReference type="GO" id="GO:0009507">
    <property type="term" value="C:chloroplast"/>
    <property type="evidence" value="ECO:0007669"/>
    <property type="project" value="UniProtKB-SubCell"/>
</dbReference>
<dbReference type="GO" id="GO:0016829">
    <property type="term" value="F:lyase activity"/>
    <property type="evidence" value="ECO:0000314"/>
    <property type="project" value="UniProtKB"/>
</dbReference>
<dbReference type="GO" id="GO:0000287">
    <property type="term" value="F:magnesium ion binding"/>
    <property type="evidence" value="ECO:0007669"/>
    <property type="project" value="InterPro"/>
</dbReference>
<dbReference type="GO" id="GO:0010333">
    <property type="term" value="F:terpene synthase activity"/>
    <property type="evidence" value="ECO:0000314"/>
    <property type="project" value="UniProtKB"/>
</dbReference>
<dbReference type="GO" id="GO:0016102">
    <property type="term" value="P:diterpenoid biosynthetic process"/>
    <property type="evidence" value="ECO:0007669"/>
    <property type="project" value="InterPro"/>
</dbReference>
<dbReference type="GO" id="GO:0043693">
    <property type="term" value="P:monoterpene biosynthetic process"/>
    <property type="evidence" value="ECO:0000314"/>
    <property type="project" value="UniProtKB"/>
</dbReference>
<dbReference type="CDD" id="cd00684">
    <property type="entry name" value="Terpene_cyclase_plant_C1"/>
    <property type="match status" value="1"/>
</dbReference>
<dbReference type="FunFam" id="1.50.10.130:FF:000004">
    <property type="entry name" value="Carene synthase, chloroplastic"/>
    <property type="match status" value="1"/>
</dbReference>
<dbReference type="FunFam" id="1.10.600.10:FF:000005">
    <property type="entry name" value="Ent-kaur-16-ene synthase, chloroplastic"/>
    <property type="match status" value="1"/>
</dbReference>
<dbReference type="Gene3D" id="1.10.600.10">
    <property type="entry name" value="Farnesyl Diphosphate Synthase"/>
    <property type="match status" value="1"/>
</dbReference>
<dbReference type="Gene3D" id="1.50.10.130">
    <property type="entry name" value="Terpene synthase, N-terminal domain"/>
    <property type="match status" value="1"/>
</dbReference>
<dbReference type="InterPro" id="IPR008949">
    <property type="entry name" value="Isoprenoid_synthase_dom_sf"/>
</dbReference>
<dbReference type="InterPro" id="IPR034741">
    <property type="entry name" value="Terpene_cyclase-like_1_C"/>
</dbReference>
<dbReference type="InterPro" id="IPR044814">
    <property type="entry name" value="Terpene_cyclase_plant_C1"/>
</dbReference>
<dbReference type="InterPro" id="IPR001906">
    <property type="entry name" value="Terpene_synth_N"/>
</dbReference>
<dbReference type="InterPro" id="IPR036965">
    <property type="entry name" value="Terpene_synth_N_sf"/>
</dbReference>
<dbReference type="InterPro" id="IPR050148">
    <property type="entry name" value="Terpene_synthase-like"/>
</dbReference>
<dbReference type="InterPro" id="IPR005630">
    <property type="entry name" value="Terpene_synthase_metal-bd"/>
</dbReference>
<dbReference type="InterPro" id="IPR008930">
    <property type="entry name" value="Terpenoid_cyclase/PrenylTrfase"/>
</dbReference>
<dbReference type="PANTHER" id="PTHR31225">
    <property type="entry name" value="OS04G0344100 PROTEIN-RELATED"/>
    <property type="match status" value="1"/>
</dbReference>
<dbReference type="Pfam" id="PF01397">
    <property type="entry name" value="Terpene_synth"/>
    <property type="match status" value="1"/>
</dbReference>
<dbReference type="Pfam" id="PF03936">
    <property type="entry name" value="Terpene_synth_C"/>
    <property type="match status" value="1"/>
</dbReference>
<dbReference type="SFLD" id="SFLDS00005">
    <property type="entry name" value="Isoprenoid_Synthase_Type_I"/>
    <property type="match status" value="1"/>
</dbReference>
<dbReference type="SFLD" id="SFLDG01019">
    <property type="entry name" value="Terpene_Cyclase_Like_1_C_Termi"/>
    <property type="match status" value="1"/>
</dbReference>
<dbReference type="SFLD" id="SFLDG01014">
    <property type="entry name" value="Terpene_Cyclase_Like_1_N-term"/>
    <property type="match status" value="1"/>
</dbReference>
<dbReference type="SUPFAM" id="SSF48239">
    <property type="entry name" value="Terpenoid cyclases/Protein prenyltransferases"/>
    <property type="match status" value="1"/>
</dbReference>
<dbReference type="SUPFAM" id="SSF48576">
    <property type="entry name" value="Terpenoid synthases"/>
    <property type="match status" value="1"/>
</dbReference>
<sequence>MSVISIVPLASKSCLYKSLMSSTHELKALCRPIATLGMCRRGKSVMASMSTSLTTAVSDDGVQRRIGHHHSNLWDDNFIQSLSSPYGASSYAESAKKLIGEVKEIFNSLSMAAGGLMSPVDDLLQHLSMVDNVERLGIDRHFQTEIKVSLDYVYSYWSEKGIGSGRDIVCTDLNTTALGFRILRLHGYTVFPDVFEHFKDQMGRIACSANHTERQISSILNLFRASLIAFPGEKVMEEAEIFSATYLKEALQTIPVSSLSQEIQYVLQYRWHSNLPRLEARTYIDILQENTKNQMLDVNTKKVLELAKLEFNIFHSLQQNELKSVSRWWKESGFPDLNFIRHRHVEFYTLVSGIDMEPKHSTFRLSFVKMCHLITVLDDMYDTFGTIDELRLFTAAVKRWDPSTTQCLPEYMKGVYTVLYETVNEMAQEAQKSQGRDTLNYVRQALEAYIGAYHKEAEWISSGYLPTFDEYFENGKVSSGHRIATLQPIFMLDIPFPHHVLQEIDFPSNFNDFACSILRLRCDTRCYQADRARGEEASCISCYMKDHPGSTQEDALNHINNMIEETIKKLNWELMKPDNNVPISSKKPAFDISRGLHHFYNYRDGYTVSSNETKNLVIKTVLEPVPM</sequence>
<name>3CAR3_PICSI</name>
<feature type="transit peptide" description="Chloroplast" evidence="2">
    <location>
        <begin position="1"/>
        <end position="36"/>
    </location>
</feature>
<feature type="chain" id="PRO_0000418969" description="Carene synthase 3, chloroplastic">
    <location>
        <begin position="37"/>
        <end position="627"/>
    </location>
</feature>
<feature type="short sequence motif" description="DDXXD motif">
    <location>
        <begin position="378"/>
        <end position="382"/>
    </location>
</feature>
<feature type="binding site" evidence="1">
    <location>
        <position position="378"/>
    </location>
    <ligand>
        <name>Mg(2+)</name>
        <dbReference type="ChEBI" id="CHEBI:18420"/>
        <label>1</label>
    </ligand>
</feature>
<feature type="binding site" evidence="1">
    <location>
        <position position="378"/>
    </location>
    <ligand>
        <name>Mg(2+)</name>
        <dbReference type="ChEBI" id="CHEBI:18420"/>
        <label>2</label>
    </ligand>
</feature>
<feature type="binding site" evidence="1">
    <location>
        <position position="382"/>
    </location>
    <ligand>
        <name>Mg(2+)</name>
        <dbReference type="ChEBI" id="CHEBI:18420"/>
        <label>1</label>
    </ligand>
</feature>
<feature type="binding site" evidence="1">
    <location>
        <position position="382"/>
    </location>
    <ligand>
        <name>Mg(2+)</name>
        <dbReference type="ChEBI" id="CHEBI:18420"/>
        <label>2</label>
    </ligand>
</feature>
<feature type="binding site" evidence="1">
    <location>
        <position position="530"/>
    </location>
    <ligand>
        <name>Mg(2+)</name>
        <dbReference type="ChEBI" id="CHEBI:18420"/>
        <label>3</label>
    </ligand>
</feature>
<feature type="sequence variant" description="In strain: cv. Q903; susceptibility to pathogens.">
    <original>D</original>
    <variation>H</variation>
    <location>
        <position position="285"/>
    </location>
</feature>
<protein>
    <recommendedName>
        <fullName>Carene synthase 3, chloroplastic</fullName>
        <shortName>PsTPS-3car3</shortName>
        <ecNumber>4.2.3.107</ecNumber>
    </recommendedName>
    <alternativeName>
        <fullName>(+)-car-3-ene synthase 3</fullName>
    </alternativeName>
    <alternativeName>
        <fullName>3-carene cyclase 3</fullName>
    </alternativeName>
</protein>
<proteinExistence type="evidence at protein level"/>
<keyword id="KW-0150">Chloroplast</keyword>
<keyword id="KW-0456">Lyase</keyword>
<keyword id="KW-0460">Magnesium</keyword>
<keyword id="KW-0464">Manganese</keyword>
<keyword id="KW-0479">Metal-binding</keyword>
<keyword id="KW-0934">Plastid</keyword>
<keyword id="KW-0809">Transit peptide</keyword>
<gene>
    <name type="primary">TPS-3car3</name>
</gene>
<comment type="function">
    <text evidence="3">Terpene synthase (TPS) involved in defensive oleoresin formation in conifers in response to insect attack or other injury.</text>
</comment>
<comment type="catalytic activity">
    <reaction evidence="3">
        <text>(2E)-geranyl diphosphate = (+)-car-3-ene + diphosphate</text>
        <dbReference type="Rhea" id="RHEA:32539"/>
        <dbReference type="ChEBI" id="CHEBI:7"/>
        <dbReference type="ChEBI" id="CHEBI:33019"/>
        <dbReference type="ChEBI" id="CHEBI:58057"/>
        <dbReference type="EC" id="4.2.3.107"/>
    </reaction>
</comment>
<comment type="cofactor">
    <cofactor evidence="1">
        <name>Mg(2+)</name>
        <dbReference type="ChEBI" id="CHEBI:18420"/>
    </cofactor>
    <cofactor evidence="1">
        <name>Mn(2+)</name>
        <dbReference type="ChEBI" id="CHEBI:29035"/>
    </cofactor>
    <text evidence="1">Binds 3 Mg(2+) or Mn(2+) ions per subunit.</text>
</comment>
<comment type="biophysicochemical properties">
    <kinetics>
        <text evidence="3">kcat is less than 0.00001 sec(-1) with geranyl diphosphate as substrate.</text>
    </kinetics>
</comment>
<comment type="pathway">
    <text>Terpene metabolism; oleoresin biosynthesis.</text>
</comment>
<comment type="subcellular location">
    <subcellularLocation>
        <location evidence="4">Plastid</location>
        <location evidence="4">Chloroplast</location>
    </subcellularLocation>
</comment>
<comment type="induction">
    <text evidence="3">By jasmonic acid (MeJA).</text>
</comment>
<comment type="miscellaneous">
    <text>Expressed only in susceptible trees.</text>
</comment>
<comment type="similarity">
    <text evidence="4">Belongs to the terpene synthase family. Tpsd subfamily.</text>
</comment>